<dbReference type="EMBL" id="BX293980">
    <property type="protein sequence ID" value="CAE77361.1"/>
    <property type="molecule type" value="Genomic_DNA"/>
</dbReference>
<dbReference type="RefSeq" id="NP_975719.1">
    <property type="nucleotide sequence ID" value="NC_005364.2"/>
</dbReference>
<dbReference type="RefSeq" id="WP_011166911.1">
    <property type="nucleotide sequence ID" value="NC_005364.2"/>
</dbReference>
<dbReference type="SMR" id="Q6MSM7"/>
<dbReference type="STRING" id="272632.MSC_0743"/>
<dbReference type="GeneID" id="93426135"/>
<dbReference type="KEGG" id="mmy:MSC_0743"/>
<dbReference type="PATRIC" id="fig|272632.4.peg.800"/>
<dbReference type="eggNOG" id="COG0089">
    <property type="taxonomic scope" value="Bacteria"/>
</dbReference>
<dbReference type="HOGENOM" id="CLU_037562_3_2_14"/>
<dbReference type="PRO" id="PR:Q6MSM7"/>
<dbReference type="Proteomes" id="UP000001016">
    <property type="component" value="Chromosome"/>
</dbReference>
<dbReference type="GO" id="GO:1990904">
    <property type="term" value="C:ribonucleoprotein complex"/>
    <property type="evidence" value="ECO:0007669"/>
    <property type="project" value="UniProtKB-KW"/>
</dbReference>
<dbReference type="GO" id="GO:0005840">
    <property type="term" value="C:ribosome"/>
    <property type="evidence" value="ECO:0007669"/>
    <property type="project" value="UniProtKB-KW"/>
</dbReference>
<dbReference type="GO" id="GO:0019843">
    <property type="term" value="F:rRNA binding"/>
    <property type="evidence" value="ECO:0007669"/>
    <property type="project" value="UniProtKB-UniRule"/>
</dbReference>
<dbReference type="GO" id="GO:0003735">
    <property type="term" value="F:structural constituent of ribosome"/>
    <property type="evidence" value="ECO:0007669"/>
    <property type="project" value="InterPro"/>
</dbReference>
<dbReference type="GO" id="GO:0006412">
    <property type="term" value="P:translation"/>
    <property type="evidence" value="ECO:0007669"/>
    <property type="project" value="UniProtKB-UniRule"/>
</dbReference>
<dbReference type="FunFam" id="3.30.70.330:FF:000001">
    <property type="entry name" value="50S ribosomal protein L23"/>
    <property type="match status" value="1"/>
</dbReference>
<dbReference type="Gene3D" id="3.30.70.330">
    <property type="match status" value="1"/>
</dbReference>
<dbReference type="HAMAP" id="MF_01369_B">
    <property type="entry name" value="Ribosomal_uL23_B"/>
    <property type="match status" value="1"/>
</dbReference>
<dbReference type="InterPro" id="IPR012677">
    <property type="entry name" value="Nucleotide-bd_a/b_plait_sf"/>
</dbReference>
<dbReference type="InterPro" id="IPR013025">
    <property type="entry name" value="Ribosomal_uL23-like"/>
</dbReference>
<dbReference type="InterPro" id="IPR012678">
    <property type="entry name" value="Ribosomal_uL23/eL15/eS24_sf"/>
</dbReference>
<dbReference type="InterPro" id="IPR001014">
    <property type="entry name" value="Ribosomal_uL23_CS"/>
</dbReference>
<dbReference type="NCBIfam" id="NF004363">
    <property type="entry name" value="PRK05738.2-4"/>
    <property type="match status" value="1"/>
</dbReference>
<dbReference type="PANTHER" id="PTHR11620">
    <property type="entry name" value="60S RIBOSOMAL PROTEIN L23A"/>
    <property type="match status" value="1"/>
</dbReference>
<dbReference type="Pfam" id="PF00276">
    <property type="entry name" value="Ribosomal_L23"/>
    <property type="match status" value="1"/>
</dbReference>
<dbReference type="SUPFAM" id="SSF54189">
    <property type="entry name" value="Ribosomal proteins S24e, L23 and L15e"/>
    <property type="match status" value="1"/>
</dbReference>
<dbReference type="PROSITE" id="PS00050">
    <property type="entry name" value="RIBOSOMAL_L23"/>
    <property type="match status" value="1"/>
</dbReference>
<accession>Q6MSM7</accession>
<organism>
    <name type="scientific">Mycoplasma mycoides subsp. mycoides SC (strain CCUG 32753 / NCTC 10114 / PG1)</name>
    <dbReference type="NCBI Taxonomy" id="272632"/>
    <lineage>
        <taxon>Bacteria</taxon>
        <taxon>Bacillati</taxon>
        <taxon>Mycoplasmatota</taxon>
        <taxon>Mollicutes</taxon>
        <taxon>Mycoplasmataceae</taxon>
        <taxon>Mycoplasma</taxon>
    </lineage>
</organism>
<reference key="1">
    <citation type="journal article" date="2004" name="Genome Res.">
        <title>The genome sequence of Mycoplasma mycoides subsp. mycoides SC type strain PG1T, the causative agent of contagious bovine pleuropneumonia (CBPP).</title>
        <authorList>
            <person name="Westberg J."/>
            <person name="Persson A."/>
            <person name="Holmberg A."/>
            <person name="Goesmann A."/>
            <person name="Lundeberg J."/>
            <person name="Johansson K.-E."/>
            <person name="Pettersson B."/>
            <person name="Uhlen M."/>
        </authorList>
    </citation>
    <scope>NUCLEOTIDE SEQUENCE [LARGE SCALE GENOMIC DNA]</scope>
    <source>
        <strain>CCUG 32753 / NCTC 10114 / PG1</strain>
    </source>
</reference>
<name>RL23_MYCMS</name>
<proteinExistence type="inferred from homology"/>
<gene>
    <name evidence="1" type="primary">rplW</name>
    <name type="ordered locus">MSC_0743</name>
</gene>
<protein>
    <recommendedName>
        <fullName evidence="1">Large ribosomal subunit protein uL23</fullName>
    </recommendedName>
    <alternativeName>
        <fullName evidence="2">50S ribosomal protein L23</fullName>
    </alternativeName>
</protein>
<keyword id="KW-1185">Reference proteome</keyword>
<keyword id="KW-0687">Ribonucleoprotein</keyword>
<keyword id="KW-0689">Ribosomal protein</keyword>
<keyword id="KW-0694">RNA-binding</keyword>
<keyword id="KW-0699">rRNA-binding</keyword>
<feature type="chain" id="PRO_0000272779" description="Large ribosomal subunit protein uL23">
    <location>
        <begin position="1"/>
        <end position="94"/>
    </location>
</feature>
<sequence>MHITEVLKKPVLTEKSFAGHKDNVYTFLVDKKANKVQIKKTFEEIFEVKVESVRTINYDAKEKRLGKYVGKKPSYKKAIITLKEGQKLDVLSDL</sequence>
<comment type="function">
    <text evidence="1">One of the early assembly proteins it binds 23S rRNA. One of the proteins that surrounds the polypeptide exit tunnel on the outside of the ribosome. Forms the main docking site for trigger factor binding to the ribosome.</text>
</comment>
<comment type="subunit">
    <text evidence="1">Part of the 50S ribosomal subunit. Contacts protein L29, and trigger factor when it is bound to the ribosome.</text>
</comment>
<comment type="similarity">
    <text evidence="1">Belongs to the universal ribosomal protein uL23 family.</text>
</comment>
<evidence type="ECO:0000255" key="1">
    <source>
        <dbReference type="HAMAP-Rule" id="MF_01369"/>
    </source>
</evidence>
<evidence type="ECO:0000305" key="2"/>